<accession>Q01302</accession>
<accession>O74694</accession>
<accession>Q7S7A5</accession>
<name>CCG6_NEUCR</name>
<keyword id="KW-1185">Reference proteome</keyword>
<comment type="induction">
    <text evidence="1">Expression levels may be influenced by circadian rhythms.</text>
</comment>
<comment type="similarity">
    <text evidence="2">Belongs to the SED1 family.</text>
</comment>
<comment type="sequence caution" evidence="2">
    <conflict type="frameshift">
        <sequence resource="EMBL-CDS" id="AAA98470"/>
    </conflict>
</comment>
<comment type="sequence caution" evidence="2">
    <conflict type="erroneous initiation">
        <sequence resource="EMBL-CDS" id="EAA31450"/>
    </conflict>
    <text>Extended N-terminus.</text>
</comment>
<feature type="chain" id="PRO_0000089413" description="Clock-controlled protein 6">
    <location>
        <begin position="1"/>
        <end position="142"/>
    </location>
</feature>
<feature type="sequence conflict" description="In Ref. 1; AAA98470." evidence="2" ref="1">
    <original>AA</original>
    <variation>GD</variation>
    <location>
        <begin position="6"/>
        <end position="7"/>
    </location>
</feature>
<feature type="sequence conflict" description="In Ref. 1; AAA98470." evidence="2" ref="1">
    <original>A</original>
    <variation>V</variation>
    <location>
        <position position="30"/>
    </location>
</feature>
<feature type="sequence conflict" description="In Ref. 1; AAA98470." evidence="2" ref="1">
    <original>C</original>
    <variation>W</variation>
    <location>
        <position position="35"/>
    </location>
</feature>
<feature type="sequence conflict" description="In Ref. 1; AAA98470." evidence="2" ref="1">
    <original>A</original>
    <variation>V</variation>
    <location>
        <position position="94"/>
    </location>
</feature>
<protein>
    <recommendedName>
        <fullName>Clock-controlled protein 6</fullName>
    </recommendedName>
</protein>
<sequence>MKFSAAAVLAAAAGAHAWSNVTYTTEIVTAVTTYCPGPTEITHGGNTYTVTEATTLTISDCPCTVTKPIITTSSVICHSCTGYVNSTIPAPTSAGSVGTGSAPAVVTPTVSPSEVPTAGAGKAAALSGAGLVGVLGLAAILL</sequence>
<organism>
    <name type="scientific">Neurospora crassa (strain ATCC 24698 / 74-OR23-1A / CBS 708.71 / DSM 1257 / FGSC 987)</name>
    <dbReference type="NCBI Taxonomy" id="367110"/>
    <lineage>
        <taxon>Eukaryota</taxon>
        <taxon>Fungi</taxon>
        <taxon>Dikarya</taxon>
        <taxon>Ascomycota</taxon>
        <taxon>Pezizomycotina</taxon>
        <taxon>Sordariomycetes</taxon>
        <taxon>Sordariomycetidae</taxon>
        <taxon>Sordariales</taxon>
        <taxon>Sordariaceae</taxon>
        <taxon>Neurospora</taxon>
    </lineage>
</organism>
<gene>
    <name type="primary">ccg-6</name>
    <name type="ORF">B8P8.100</name>
    <name type="ORF">NCU01418</name>
</gene>
<evidence type="ECO:0000269" key="1">
    <source>
    </source>
</evidence>
<evidence type="ECO:0000305" key="2"/>
<dbReference type="EMBL" id="U46086">
    <property type="protein sequence ID" value="AAA98470.1"/>
    <property type="status" value="ALT_FRAME"/>
    <property type="molecule type" value="mRNA"/>
</dbReference>
<dbReference type="EMBL" id="AF088908">
    <property type="protein sequence ID" value="AAC64287.1"/>
    <property type="molecule type" value="Genomic_DNA"/>
</dbReference>
<dbReference type="EMBL" id="BX294018">
    <property type="protein sequence ID" value="CAD70877.1"/>
    <property type="molecule type" value="Genomic_DNA"/>
</dbReference>
<dbReference type="EMBL" id="CM002240">
    <property type="protein sequence ID" value="EAA31450.2"/>
    <property type="status" value="ALT_INIT"/>
    <property type="molecule type" value="Genomic_DNA"/>
</dbReference>
<dbReference type="PIR" id="T47211">
    <property type="entry name" value="T47211"/>
</dbReference>
<dbReference type="RefSeq" id="XP_960686.2">
    <property type="nucleotide sequence ID" value="XM_955593.3"/>
</dbReference>
<dbReference type="STRING" id="367110.Q01302"/>
<dbReference type="PaxDb" id="5141-EFNCRP00000004120"/>
<dbReference type="EnsemblFungi" id="EAA31450">
    <property type="protein sequence ID" value="EAA31450"/>
    <property type="gene ID" value="NCU01418"/>
</dbReference>
<dbReference type="GeneID" id="3876833"/>
<dbReference type="KEGG" id="ncr:NCU01418"/>
<dbReference type="HOGENOM" id="CLU_092869_4_0_1"/>
<dbReference type="InParanoid" id="Q01302"/>
<dbReference type="OMA" id="CTITRPV"/>
<dbReference type="OrthoDB" id="4094614at2759"/>
<dbReference type="Proteomes" id="UP000001805">
    <property type="component" value="Chromosome 2, Linkage Group V"/>
</dbReference>
<dbReference type="GO" id="GO:0009277">
    <property type="term" value="C:fungal-type cell wall"/>
    <property type="evidence" value="ECO:0000318"/>
    <property type="project" value="GO_Central"/>
</dbReference>
<dbReference type="GO" id="GO:0005199">
    <property type="term" value="F:structural constituent of cell wall"/>
    <property type="evidence" value="ECO:0000318"/>
    <property type="project" value="GO_Central"/>
</dbReference>
<dbReference type="GO" id="GO:0031505">
    <property type="term" value="P:fungal-type cell wall organization"/>
    <property type="evidence" value="ECO:0000318"/>
    <property type="project" value="GO_Central"/>
</dbReference>
<dbReference type="InterPro" id="IPR038843">
    <property type="entry name" value="Sed1/Spi1"/>
</dbReference>
<dbReference type="PANTHER" id="PTHR35523">
    <property type="entry name" value="CELL WALL PROTEIN SED1"/>
    <property type="match status" value="1"/>
</dbReference>
<dbReference type="PANTHER" id="PTHR35523:SF1">
    <property type="entry name" value="CELL WALL PROTEIN SED1"/>
    <property type="match status" value="1"/>
</dbReference>
<reference key="1">
    <citation type="journal article" date="1996" name="Proc. Natl. Acad. Sci. U.S.A.">
        <title>Circadian clock-controlled genes isolated from Neurospora crassa are late night- to early morning-specific.</title>
        <authorList>
            <person name="Bell-Pedersen D."/>
            <person name="Shinohara M.L."/>
            <person name="Loros J.J."/>
            <person name="Dunlap J.C."/>
        </authorList>
    </citation>
    <scope>NUCLEOTIDE SEQUENCE [GENOMIC DNA]</scope>
    <scope>INDUCTION</scope>
    <source>
        <strain>FRQ7 / 695-425 / FGSC 4898</strain>
    </source>
</reference>
<reference key="2">
    <citation type="submission" date="1998-09" db="EMBL/GenBank/DDBJ databases">
        <title>Identification of factors required to mediate the circadian regulation of target genes.</title>
        <authorList>
            <person name="Shinohara M.L."/>
            <person name="Bell-Pedersen D."/>
            <person name="Loros J.J."/>
            <person name="Dunlap J.C."/>
        </authorList>
    </citation>
    <scope>NUCLEOTIDE SEQUENCE</scope>
    <scope>SEQUENCE REVISION</scope>
</reference>
<reference key="3">
    <citation type="journal article" date="2003" name="Nucleic Acids Res.">
        <title>What's in the genome of a filamentous fungus? Analysis of the Neurospora genome sequence.</title>
        <authorList>
            <person name="Mannhaupt G."/>
            <person name="Montrone C."/>
            <person name="Haase D."/>
            <person name="Mewes H.-W."/>
            <person name="Aign V."/>
            <person name="Hoheisel J.D."/>
            <person name="Fartmann B."/>
            <person name="Nyakatura G."/>
            <person name="Kempken F."/>
            <person name="Maier J."/>
            <person name="Schulte U."/>
        </authorList>
    </citation>
    <scope>NUCLEOTIDE SEQUENCE [LARGE SCALE GENOMIC DNA]</scope>
    <source>
        <strain>ATCC 24698 / 74-OR23-1A / CBS 708.71 / DSM 1257 / FGSC 987</strain>
    </source>
</reference>
<reference key="4">
    <citation type="journal article" date="2003" name="Nature">
        <title>The genome sequence of the filamentous fungus Neurospora crassa.</title>
        <authorList>
            <person name="Galagan J.E."/>
            <person name="Calvo S.E."/>
            <person name="Borkovich K.A."/>
            <person name="Selker E.U."/>
            <person name="Read N.D."/>
            <person name="Jaffe D.B."/>
            <person name="FitzHugh W."/>
            <person name="Ma L.-J."/>
            <person name="Smirnov S."/>
            <person name="Purcell S."/>
            <person name="Rehman B."/>
            <person name="Elkins T."/>
            <person name="Engels R."/>
            <person name="Wang S."/>
            <person name="Nielsen C.B."/>
            <person name="Butler J."/>
            <person name="Endrizzi M."/>
            <person name="Qui D."/>
            <person name="Ianakiev P."/>
            <person name="Bell-Pedersen D."/>
            <person name="Nelson M.A."/>
            <person name="Werner-Washburne M."/>
            <person name="Selitrennikoff C.P."/>
            <person name="Kinsey J.A."/>
            <person name="Braun E.L."/>
            <person name="Zelter A."/>
            <person name="Schulte U."/>
            <person name="Kothe G.O."/>
            <person name="Jedd G."/>
            <person name="Mewes H.-W."/>
            <person name="Staben C."/>
            <person name="Marcotte E."/>
            <person name="Greenberg D."/>
            <person name="Roy A."/>
            <person name="Foley K."/>
            <person name="Naylor J."/>
            <person name="Stange-Thomann N."/>
            <person name="Barrett R."/>
            <person name="Gnerre S."/>
            <person name="Kamal M."/>
            <person name="Kamvysselis M."/>
            <person name="Mauceli E.W."/>
            <person name="Bielke C."/>
            <person name="Rudd S."/>
            <person name="Frishman D."/>
            <person name="Krystofova S."/>
            <person name="Rasmussen C."/>
            <person name="Metzenberg R.L."/>
            <person name="Perkins D.D."/>
            <person name="Kroken S."/>
            <person name="Cogoni C."/>
            <person name="Macino G."/>
            <person name="Catcheside D.E.A."/>
            <person name="Li W."/>
            <person name="Pratt R.J."/>
            <person name="Osmani S.A."/>
            <person name="DeSouza C.P.C."/>
            <person name="Glass N.L."/>
            <person name="Orbach M.J."/>
            <person name="Berglund J.A."/>
            <person name="Voelker R."/>
            <person name="Yarden O."/>
            <person name="Plamann M."/>
            <person name="Seiler S."/>
            <person name="Dunlap J.C."/>
            <person name="Radford A."/>
            <person name="Aramayo R."/>
            <person name="Natvig D.O."/>
            <person name="Alex L.A."/>
            <person name="Mannhaupt G."/>
            <person name="Ebbole D.J."/>
            <person name="Freitag M."/>
            <person name="Paulsen I."/>
            <person name="Sachs M.S."/>
            <person name="Lander E.S."/>
            <person name="Nusbaum C."/>
            <person name="Birren B.W."/>
        </authorList>
    </citation>
    <scope>NUCLEOTIDE SEQUENCE [LARGE SCALE GENOMIC DNA]</scope>
    <source>
        <strain>ATCC 24698 / 74-OR23-1A / CBS 708.71 / DSM 1257 / FGSC 987</strain>
    </source>
</reference>
<proteinExistence type="evidence at transcript level"/>